<organism>
    <name type="scientific">Nitrosomonas eutropha (strain DSM 101675 / C91 / Nm57)</name>
    <dbReference type="NCBI Taxonomy" id="335283"/>
    <lineage>
        <taxon>Bacteria</taxon>
        <taxon>Pseudomonadati</taxon>
        <taxon>Pseudomonadota</taxon>
        <taxon>Betaproteobacteria</taxon>
        <taxon>Nitrosomonadales</taxon>
        <taxon>Nitrosomonadaceae</taxon>
        <taxon>Nitrosomonas</taxon>
    </lineage>
</organism>
<proteinExistence type="inferred from homology"/>
<name>RS7_NITEC</name>
<comment type="function">
    <text evidence="1">One of the primary rRNA binding proteins, it binds directly to 16S rRNA where it nucleates assembly of the head domain of the 30S subunit. Is located at the subunit interface close to the decoding center, probably blocks exit of the E-site tRNA.</text>
</comment>
<comment type="subunit">
    <text evidence="1">Part of the 30S ribosomal subunit. Contacts proteins S9 and S11.</text>
</comment>
<comment type="similarity">
    <text evidence="1">Belongs to the universal ribosomal protein uS7 family.</text>
</comment>
<protein>
    <recommendedName>
        <fullName evidence="1">Small ribosomal subunit protein uS7</fullName>
    </recommendedName>
    <alternativeName>
        <fullName evidence="2">30S ribosomal protein S7</fullName>
    </alternativeName>
</protein>
<feature type="chain" id="PRO_1000014243" description="Small ribosomal subunit protein uS7">
    <location>
        <begin position="1"/>
        <end position="156"/>
    </location>
</feature>
<sequence>MPRRREVPKREILPDPKYHNVELAKFVNVLMTRGKKSIAEQIIYGALSHVEKKSGKDPVEVFTQALSNIRPVVEVKSRRVGGANYQVPVEVRSVRRSALAMRWLRDAARKRSEKSMDLRLAGELLEASENRGTAIKKREEVHRMAESNKAFSHFRF</sequence>
<keyword id="KW-0687">Ribonucleoprotein</keyword>
<keyword id="KW-0689">Ribosomal protein</keyword>
<keyword id="KW-0694">RNA-binding</keyword>
<keyword id="KW-0699">rRNA-binding</keyword>
<keyword id="KW-0820">tRNA-binding</keyword>
<dbReference type="EMBL" id="CP000450">
    <property type="protein sequence ID" value="ABI58827.1"/>
    <property type="molecule type" value="Genomic_DNA"/>
</dbReference>
<dbReference type="RefSeq" id="WP_011633669.1">
    <property type="nucleotide sequence ID" value="NC_008344.1"/>
</dbReference>
<dbReference type="SMR" id="Q0AIJ9"/>
<dbReference type="STRING" id="335283.Neut_0554"/>
<dbReference type="KEGG" id="net:Neut_0554"/>
<dbReference type="eggNOG" id="COG0049">
    <property type="taxonomic scope" value="Bacteria"/>
</dbReference>
<dbReference type="HOGENOM" id="CLU_072226_1_1_4"/>
<dbReference type="OrthoDB" id="9807653at2"/>
<dbReference type="Proteomes" id="UP000001966">
    <property type="component" value="Chromosome"/>
</dbReference>
<dbReference type="GO" id="GO:0015935">
    <property type="term" value="C:small ribosomal subunit"/>
    <property type="evidence" value="ECO:0007669"/>
    <property type="project" value="InterPro"/>
</dbReference>
<dbReference type="GO" id="GO:0019843">
    <property type="term" value="F:rRNA binding"/>
    <property type="evidence" value="ECO:0007669"/>
    <property type="project" value="UniProtKB-UniRule"/>
</dbReference>
<dbReference type="GO" id="GO:0003735">
    <property type="term" value="F:structural constituent of ribosome"/>
    <property type="evidence" value="ECO:0007669"/>
    <property type="project" value="InterPro"/>
</dbReference>
<dbReference type="GO" id="GO:0000049">
    <property type="term" value="F:tRNA binding"/>
    <property type="evidence" value="ECO:0007669"/>
    <property type="project" value="UniProtKB-UniRule"/>
</dbReference>
<dbReference type="GO" id="GO:0006412">
    <property type="term" value="P:translation"/>
    <property type="evidence" value="ECO:0007669"/>
    <property type="project" value="UniProtKB-UniRule"/>
</dbReference>
<dbReference type="CDD" id="cd14869">
    <property type="entry name" value="uS7_Bacteria"/>
    <property type="match status" value="1"/>
</dbReference>
<dbReference type="FunFam" id="1.10.455.10:FF:000001">
    <property type="entry name" value="30S ribosomal protein S7"/>
    <property type="match status" value="1"/>
</dbReference>
<dbReference type="Gene3D" id="1.10.455.10">
    <property type="entry name" value="Ribosomal protein S7 domain"/>
    <property type="match status" value="1"/>
</dbReference>
<dbReference type="HAMAP" id="MF_00480_B">
    <property type="entry name" value="Ribosomal_uS7_B"/>
    <property type="match status" value="1"/>
</dbReference>
<dbReference type="InterPro" id="IPR000235">
    <property type="entry name" value="Ribosomal_uS7"/>
</dbReference>
<dbReference type="InterPro" id="IPR005717">
    <property type="entry name" value="Ribosomal_uS7_bac/org-type"/>
</dbReference>
<dbReference type="InterPro" id="IPR020606">
    <property type="entry name" value="Ribosomal_uS7_CS"/>
</dbReference>
<dbReference type="InterPro" id="IPR023798">
    <property type="entry name" value="Ribosomal_uS7_dom"/>
</dbReference>
<dbReference type="InterPro" id="IPR036823">
    <property type="entry name" value="Ribosomal_uS7_dom_sf"/>
</dbReference>
<dbReference type="NCBIfam" id="TIGR01029">
    <property type="entry name" value="rpsG_bact"/>
    <property type="match status" value="1"/>
</dbReference>
<dbReference type="PANTHER" id="PTHR11205">
    <property type="entry name" value="RIBOSOMAL PROTEIN S7"/>
    <property type="match status" value="1"/>
</dbReference>
<dbReference type="Pfam" id="PF00177">
    <property type="entry name" value="Ribosomal_S7"/>
    <property type="match status" value="1"/>
</dbReference>
<dbReference type="PIRSF" id="PIRSF002122">
    <property type="entry name" value="RPS7p_RPS7a_RPS5e_RPS7o"/>
    <property type="match status" value="1"/>
</dbReference>
<dbReference type="SUPFAM" id="SSF47973">
    <property type="entry name" value="Ribosomal protein S7"/>
    <property type="match status" value="1"/>
</dbReference>
<dbReference type="PROSITE" id="PS00052">
    <property type="entry name" value="RIBOSOMAL_S7"/>
    <property type="match status" value="1"/>
</dbReference>
<evidence type="ECO:0000255" key="1">
    <source>
        <dbReference type="HAMAP-Rule" id="MF_00480"/>
    </source>
</evidence>
<evidence type="ECO:0000305" key="2"/>
<reference key="1">
    <citation type="journal article" date="2007" name="Environ. Microbiol.">
        <title>Whole-genome analysis of the ammonia-oxidizing bacterium, Nitrosomonas eutropha C91: implications for niche adaptation.</title>
        <authorList>
            <person name="Stein L.Y."/>
            <person name="Arp D.J."/>
            <person name="Berube P.M."/>
            <person name="Chain P.S."/>
            <person name="Hauser L."/>
            <person name="Jetten M.S."/>
            <person name="Klotz M.G."/>
            <person name="Larimer F.W."/>
            <person name="Norton J.M."/>
            <person name="Op den Camp H.J.M."/>
            <person name="Shin M."/>
            <person name="Wei X."/>
        </authorList>
    </citation>
    <scope>NUCLEOTIDE SEQUENCE [LARGE SCALE GENOMIC DNA]</scope>
    <source>
        <strain>DSM 101675 / C91 / Nm57</strain>
    </source>
</reference>
<accession>Q0AIJ9</accession>
<gene>
    <name evidence="1" type="primary">rpsG</name>
    <name type="ordered locus">Neut_0554</name>
</gene>